<comment type="function">
    <text evidence="1">Pyrophosphatase that catalyzes the hydrolysis of nucleoside triphosphates to their monophosphate derivatives, with a high preference for the non-canonical purine nucleotides XTP (xanthosine triphosphate), dITP (deoxyinosine triphosphate) and ITP. Seems to function as a house-cleaning enzyme that removes non-canonical purine nucleotides from the nucleotide pool, thus preventing their incorporation into DNA/RNA and avoiding chromosomal lesions.</text>
</comment>
<comment type="catalytic activity">
    <reaction evidence="1">
        <text>XTP + H2O = XMP + diphosphate + H(+)</text>
        <dbReference type="Rhea" id="RHEA:28610"/>
        <dbReference type="ChEBI" id="CHEBI:15377"/>
        <dbReference type="ChEBI" id="CHEBI:15378"/>
        <dbReference type="ChEBI" id="CHEBI:33019"/>
        <dbReference type="ChEBI" id="CHEBI:57464"/>
        <dbReference type="ChEBI" id="CHEBI:61314"/>
        <dbReference type="EC" id="3.6.1.66"/>
    </reaction>
</comment>
<comment type="catalytic activity">
    <reaction evidence="1">
        <text>dITP + H2O = dIMP + diphosphate + H(+)</text>
        <dbReference type="Rhea" id="RHEA:28342"/>
        <dbReference type="ChEBI" id="CHEBI:15377"/>
        <dbReference type="ChEBI" id="CHEBI:15378"/>
        <dbReference type="ChEBI" id="CHEBI:33019"/>
        <dbReference type="ChEBI" id="CHEBI:61194"/>
        <dbReference type="ChEBI" id="CHEBI:61382"/>
        <dbReference type="EC" id="3.6.1.66"/>
    </reaction>
</comment>
<comment type="catalytic activity">
    <reaction evidence="1">
        <text>ITP + H2O = IMP + diphosphate + H(+)</text>
        <dbReference type="Rhea" id="RHEA:29399"/>
        <dbReference type="ChEBI" id="CHEBI:15377"/>
        <dbReference type="ChEBI" id="CHEBI:15378"/>
        <dbReference type="ChEBI" id="CHEBI:33019"/>
        <dbReference type="ChEBI" id="CHEBI:58053"/>
        <dbReference type="ChEBI" id="CHEBI:61402"/>
        <dbReference type="EC" id="3.6.1.66"/>
    </reaction>
</comment>
<comment type="cofactor">
    <cofactor evidence="1">
        <name>Mg(2+)</name>
        <dbReference type="ChEBI" id="CHEBI:18420"/>
    </cofactor>
    <text evidence="1">Binds 1 Mg(2+) ion per subunit.</text>
</comment>
<comment type="subunit">
    <text evidence="1">Homodimer.</text>
</comment>
<comment type="similarity">
    <text evidence="1">Belongs to the HAM1 NTPase family.</text>
</comment>
<organism>
    <name type="scientific">Lactobacillus acidophilus (strain ATCC 700396 / NCK56 / N2 / NCFM)</name>
    <dbReference type="NCBI Taxonomy" id="272621"/>
    <lineage>
        <taxon>Bacteria</taxon>
        <taxon>Bacillati</taxon>
        <taxon>Bacillota</taxon>
        <taxon>Bacilli</taxon>
        <taxon>Lactobacillales</taxon>
        <taxon>Lactobacillaceae</taxon>
        <taxon>Lactobacillus</taxon>
    </lineage>
</organism>
<proteinExistence type="inferred from homology"/>
<accession>Q5FLV7</accession>
<evidence type="ECO:0000255" key="1">
    <source>
        <dbReference type="HAMAP-Rule" id="MF_01405"/>
    </source>
</evidence>
<protein>
    <recommendedName>
        <fullName evidence="1">dITP/XTP pyrophosphatase</fullName>
        <ecNumber evidence="1">3.6.1.66</ecNumber>
    </recommendedName>
    <alternativeName>
        <fullName evidence="1">Non-canonical purine NTP pyrophosphatase</fullName>
    </alternativeName>
    <alternativeName>
        <fullName evidence="1">Non-standard purine NTP pyrophosphatase</fullName>
    </alternativeName>
    <alternativeName>
        <fullName evidence="1">Nucleoside-triphosphate diphosphatase</fullName>
    </alternativeName>
    <alternativeName>
        <fullName evidence="1">Nucleoside-triphosphate pyrophosphatase</fullName>
        <shortName evidence="1">NTPase</shortName>
    </alternativeName>
</protein>
<sequence>MSQKILFATGNKGKARELKEAFKTAGVDVEIITNSDLDNPPHPIESGRTFEANAKIKAHELADYSKLPTIADDSGLMVDALNGEPGVRSARYAGEAHNDAKNNAKLLANLGGIPDEKRTAKFWTTIVVSMPGEFEKDLVVSGTCSGRILAAPRGDDGFGYDPLFFVPKKDKTFAQMTTDEKNEISHRGNVVRELLKVLPALA</sequence>
<keyword id="KW-0378">Hydrolase</keyword>
<keyword id="KW-0460">Magnesium</keyword>
<keyword id="KW-0479">Metal-binding</keyword>
<keyword id="KW-0546">Nucleotide metabolism</keyword>
<keyword id="KW-0547">Nucleotide-binding</keyword>
<keyword id="KW-1185">Reference proteome</keyword>
<name>IXTPA_LACAC</name>
<gene>
    <name type="ordered locus">LBA0426</name>
</gene>
<dbReference type="EC" id="3.6.1.66" evidence="1"/>
<dbReference type="EMBL" id="CP000033">
    <property type="protein sequence ID" value="AAV42317.1"/>
    <property type="molecule type" value="Genomic_DNA"/>
</dbReference>
<dbReference type="RefSeq" id="YP_193348.1">
    <property type="nucleotide sequence ID" value="NC_006814.3"/>
</dbReference>
<dbReference type="SMR" id="Q5FLV7"/>
<dbReference type="STRING" id="272621.LBA0426"/>
<dbReference type="KEGG" id="lac:LBA0426"/>
<dbReference type="PATRIC" id="fig|272621.13.peg.411"/>
<dbReference type="eggNOG" id="COG0127">
    <property type="taxonomic scope" value="Bacteria"/>
</dbReference>
<dbReference type="HOGENOM" id="CLU_082080_0_3_9"/>
<dbReference type="OrthoDB" id="9807456at2"/>
<dbReference type="BioCyc" id="LACI272621:G1G49-420-MONOMER"/>
<dbReference type="Proteomes" id="UP000006381">
    <property type="component" value="Chromosome"/>
</dbReference>
<dbReference type="GO" id="GO:0005829">
    <property type="term" value="C:cytosol"/>
    <property type="evidence" value="ECO:0007669"/>
    <property type="project" value="TreeGrafter"/>
</dbReference>
<dbReference type="GO" id="GO:0035870">
    <property type="term" value="F:dITP diphosphatase activity"/>
    <property type="evidence" value="ECO:0007669"/>
    <property type="project" value="RHEA"/>
</dbReference>
<dbReference type="GO" id="GO:0036220">
    <property type="term" value="F:ITP diphosphatase activity"/>
    <property type="evidence" value="ECO:0007669"/>
    <property type="project" value="UniProtKB-EC"/>
</dbReference>
<dbReference type="GO" id="GO:0046872">
    <property type="term" value="F:metal ion binding"/>
    <property type="evidence" value="ECO:0007669"/>
    <property type="project" value="UniProtKB-KW"/>
</dbReference>
<dbReference type="GO" id="GO:0000166">
    <property type="term" value="F:nucleotide binding"/>
    <property type="evidence" value="ECO:0007669"/>
    <property type="project" value="UniProtKB-KW"/>
</dbReference>
<dbReference type="GO" id="GO:0017111">
    <property type="term" value="F:ribonucleoside triphosphate phosphatase activity"/>
    <property type="evidence" value="ECO:0007669"/>
    <property type="project" value="InterPro"/>
</dbReference>
<dbReference type="GO" id="GO:0036222">
    <property type="term" value="F:XTP diphosphatase activity"/>
    <property type="evidence" value="ECO:0007669"/>
    <property type="project" value="RHEA"/>
</dbReference>
<dbReference type="GO" id="GO:0009117">
    <property type="term" value="P:nucleotide metabolic process"/>
    <property type="evidence" value="ECO:0007669"/>
    <property type="project" value="UniProtKB-KW"/>
</dbReference>
<dbReference type="GO" id="GO:0009146">
    <property type="term" value="P:purine nucleoside triphosphate catabolic process"/>
    <property type="evidence" value="ECO:0007669"/>
    <property type="project" value="UniProtKB-UniRule"/>
</dbReference>
<dbReference type="CDD" id="cd00515">
    <property type="entry name" value="HAM1"/>
    <property type="match status" value="1"/>
</dbReference>
<dbReference type="FunFam" id="3.90.950.10:FF:000001">
    <property type="entry name" value="dITP/XTP pyrophosphatase"/>
    <property type="match status" value="1"/>
</dbReference>
<dbReference type="Gene3D" id="3.90.950.10">
    <property type="match status" value="1"/>
</dbReference>
<dbReference type="HAMAP" id="MF_01405">
    <property type="entry name" value="Non_canon_purine_NTPase"/>
    <property type="match status" value="1"/>
</dbReference>
<dbReference type="InterPro" id="IPR020922">
    <property type="entry name" value="dITP/XTP_pyrophosphatase"/>
</dbReference>
<dbReference type="InterPro" id="IPR029001">
    <property type="entry name" value="ITPase-like_fam"/>
</dbReference>
<dbReference type="InterPro" id="IPR002637">
    <property type="entry name" value="RdgB/HAM1"/>
</dbReference>
<dbReference type="NCBIfam" id="NF011397">
    <property type="entry name" value="PRK14822.1"/>
    <property type="match status" value="1"/>
</dbReference>
<dbReference type="NCBIfam" id="TIGR00042">
    <property type="entry name" value="RdgB/HAM1 family non-canonical purine NTP pyrophosphatase"/>
    <property type="match status" value="1"/>
</dbReference>
<dbReference type="PANTHER" id="PTHR11067:SF9">
    <property type="entry name" value="INOSINE TRIPHOSPHATE PYROPHOSPHATASE"/>
    <property type="match status" value="1"/>
</dbReference>
<dbReference type="PANTHER" id="PTHR11067">
    <property type="entry name" value="INOSINE TRIPHOSPHATE PYROPHOSPHATASE/HAM1 PROTEIN"/>
    <property type="match status" value="1"/>
</dbReference>
<dbReference type="Pfam" id="PF01725">
    <property type="entry name" value="Ham1p_like"/>
    <property type="match status" value="1"/>
</dbReference>
<dbReference type="SUPFAM" id="SSF52972">
    <property type="entry name" value="ITPase-like"/>
    <property type="match status" value="1"/>
</dbReference>
<feature type="chain" id="PRO_0000178177" description="dITP/XTP pyrophosphatase">
    <location>
        <begin position="1"/>
        <end position="202"/>
    </location>
</feature>
<feature type="active site" description="Proton acceptor" evidence="1">
    <location>
        <position position="73"/>
    </location>
</feature>
<feature type="binding site" evidence="1">
    <location>
        <begin position="9"/>
        <end position="14"/>
    </location>
    <ligand>
        <name>substrate</name>
    </ligand>
</feature>
<feature type="binding site" evidence="1">
    <location>
        <position position="73"/>
    </location>
    <ligand>
        <name>Mg(2+)</name>
        <dbReference type="ChEBI" id="CHEBI:18420"/>
    </ligand>
</feature>
<feature type="binding site" evidence="1">
    <location>
        <position position="74"/>
    </location>
    <ligand>
        <name>substrate</name>
    </ligand>
</feature>
<feature type="binding site" evidence="1">
    <location>
        <begin position="158"/>
        <end position="161"/>
    </location>
    <ligand>
        <name>substrate</name>
    </ligand>
</feature>
<feature type="binding site" evidence="1">
    <location>
        <position position="181"/>
    </location>
    <ligand>
        <name>substrate</name>
    </ligand>
</feature>
<feature type="binding site" evidence="1">
    <location>
        <begin position="186"/>
        <end position="187"/>
    </location>
    <ligand>
        <name>substrate</name>
    </ligand>
</feature>
<reference key="1">
    <citation type="journal article" date="2005" name="Proc. Natl. Acad. Sci. U.S.A.">
        <title>Complete genome sequence of the probiotic lactic acid bacterium Lactobacillus acidophilus NCFM.</title>
        <authorList>
            <person name="Altermann E."/>
            <person name="Russell W.M."/>
            <person name="Azcarate-Peril M.A."/>
            <person name="Barrangou R."/>
            <person name="Buck B.L."/>
            <person name="McAuliffe O."/>
            <person name="Souther N."/>
            <person name="Dobson A."/>
            <person name="Duong T."/>
            <person name="Callanan M."/>
            <person name="Lick S."/>
            <person name="Hamrick A."/>
            <person name="Cano R."/>
            <person name="Klaenhammer T.R."/>
        </authorList>
    </citation>
    <scope>NUCLEOTIDE SEQUENCE [LARGE SCALE GENOMIC DNA]</scope>
    <source>
        <strain>ATCC 700396 / NCK56 / N2 / NCFM</strain>
    </source>
</reference>